<name>BS222_STAPS</name>
<keyword id="KW-0002">3D-structure</keyword>
<keyword id="KW-0044">Antibiotic</keyword>
<keyword id="KW-0929">Antimicrobial</keyword>
<keyword id="KW-0078">Bacteriocin</keyword>
<keyword id="KW-0204">Cytolysis</keyword>
<keyword id="KW-0903">Direct protein sequencing</keyword>
<keyword id="KW-0291">Formylation</keyword>
<keyword id="KW-0614">Plasmid</keyword>
<keyword id="KW-0964">Secreted</keyword>
<dbReference type="EMBL" id="CP011490">
    <property type="protein sequence ID" value="ALI97662.1"/>
    <property type="molecule type" value="Genomic_DNA"/>
</dbReference>
<dbReference type="RefSeq" id="WP_143212018.1">
    <property type="nucleotide sequence ID" value="NZ_BAAFHU010000048.1"/>
</dbReference>
<dbReference type="PDB" id="5LWC">
    <property type="method" value="NMR"/>
    <property type="chains" value="A=1-50"/>
</dbReference>
<dbReference type="PDB" id="7NYI">
    <property type="method" value="NMR"/>
    <property type="chains" value="A=1-50"/>
</dbReference>
<dbReference type="PDBsum" id="5LWC"/>
<dbReference type="PDBsum" id="7NYI"/>
<dbReference type="SMR" id="A0A0P0C3P7"/>
<dbReference type="GO" id="GO:0005576">
    <property type="term" value="C:extracellular region"/>
    <property type="evidence" value="ECO:0007669"/>
    <property type="project" value="UniProtKB-SubCell"/>
</dbReference>
<dbReference type="GO" id="GO:0042742">
    <property type="term" value="P:defense response to bacterium"/>
    <property type="evidence" value="ECO:0007669"/>
    <property type="project" value="UniProtKB-KW"/>
</dbReference>
<dbReference type="GO" id="GO:0031640">
    <property type="term" value="P:killing of cells of another organism"/>
    <property type="evidence" value="ECO:0007669"/>
    <property type="project" value="UniProtKB-KW"/>
</dbReference>
<dbReference type="NCBIfam" id="NF033881">
    <property type="entry name" value="aureocin_A53"/>
    <property type="match status" value="1"/>
</dbReference>
<organism evidence="2">
    <name type="scientific">Staphylococcus pseudintermedius</name>
    <dbReference type="NCBI Taxonomy" id="283734"/>
    <lineage>
        <taxon>Bacteria</taxon>
        <taxon>Bacillati</taxon>
        <taxon>Bacillota</taxon>
        <taxon>Bacilli</taxon>
        <taxon>Bacillales</taxon>
        <taxon>Staphylococcaceae</taxon>
        <taxon>Staphylococcus</taxon>
        <taxon>Staphylococcus intermedius group</taxon>
    </lineage>
</organism>
<accession>A0A0P0C3P7</accession>
<accession>C0HJT1</accession>
<protein>
    <recommendedName>
        <fullName evidence="2">Bacteriocin BacSp222</fullName>
    </recommendedName>
</protein>
<sequence>MAGLLRFLLSKGRALYNWAKSHVGKVWEWLKSGATYEQIKEWIENALGWR</sequence>
<proteinExistence type="evidence at protein level"/>
<geneLocation type="plasmid" evidence="2">
    <name>p222</name>
</geneLocation>
<reference evidence="2" key="1">
    <citation type="journal article" date="2015" name="Sci. Rep.">
        <title>A peptide factor secreted by Staphylococcus pseudintermedius exhibits properties of both bacteriocins and virulence factors.</title>
        <authorList>
            <person name="Wladyka B."/>
            <person name="Piejko M."/>
            <person name="Bzowska M."/>
            <person name="Pieta P."/>
            <person name="Krzysik M."/>
            <person name="Mazurek L."/>
            <person name="Guevara-Lora I."/>
            <person name="Bukowski M."/>
            <person name="Sabat A.J."/>
            <person name="Friedrich A.W."/>
            <person name="Bonar E."/>
            <person name="Miedzobrodzki J."/>
            <person name="Dubin A."/>
            <person name="Mak P."/>
        </authorList>
    </citation>
    <scope>NUCLEOTIDE SEQUENCE [LARGE SCALE GENOMIC DNA]</scope>
    <scope>PROTEIN SEQUENCE</scope>
    <scope>FUNCTION</scope>
    <scope>BIOPHYSICOCHEMICAL PROPERTIES</scope>
    <scope>SUBCELLULAR LOCATION</scope>
    <scope>INDUCTION</scope>
    <scope>FORMYLATION AT MET-1</scope>
    <scope>MASS SPECTROMETRY</scope>
    <source>
        <strain evidence="2">222</strain>
        <plasmid evidence="2">p222</plasmid>
    </source>
</reference>
<feature type="peptide" id="PRO_0000438329" description="Bacteriocin BacSp222" evidence="1">
    <location>
        <begin position="1"/>
        <end position="50"/>
    </location>
</feature>
<feature type="modified residue" description="N-formylmethionine" evidence="1">
    <location>
        <position position="1"/>
    </location>
</feature>
<feature type="helix" evidence="3">
    <location>
        <begin position="2"/>
        <end position="11"/>
    </location>
</feature>
<feature type="helix" evidence="3">
    <location>
        <begin position="13"/>
        <end position="21"/>
    </location>
</feature>
<feature type="helix" evidence="3">
    <location>
        <begin position="23"/>
        <end position="32"/>
    </location>
</feature>
<feature type="helix" evidence="3">
    <location>
        <begin position="36"/>
        <end position="49"/>
    </location>
</feature>
<evidence type="ECO:0000269" key="1">
    <source>
    </source>
</evidence>
<evidence type="ECO:0000312" key="2">
    <source>
        <dbReference type="EMBL" id="ALI97662.1"/>
    </source>
</evidence>
<evidence type="ECO:0007829" key="3">
    <source>
        <dbReference type="PDB" id="5LWC"/>
    </source>
</evidence>
<comment type="function">
    <text evidence="1">Has bacteriolytic activity against Gram-positive bacteria B.subtilis, L.lactis and M.luteus and several species from genus Staphylococcus including methicillin-resistant S.aureus, with MIC values ranging from 0.11 uM to 7.8 uM. Has no activity against Gram-negative bacteria or fungi. In vitro, has a dose-dependent cytolytic effect on eukaryotic cells.</text>
</comment>
<comment type="biophysicochemical properties">
    <temperatureDependence>
        <text evidence="1">Thermostable. Retains virtually all of its activity after incubation at 100 degress Celsius for 3 hours.</text>
    </temperatureDependence>
</comment>
<comment type="subcellular location">
    <subcellularLocation>
        <location evidence="1">Secreted</location>
    </subcellularLocation>
</comment>
<comment type="induction">
    <text evidence="1">Mainly expressed during the logarithmic phase.</text>
</comment>
<comment type="mass spectrometry"/>
<comment type="miscellaneous">
    <text evidence="1">Highly resistant to proteases.</text>
</comment>